<keyword id="KW-0687">Ribonucleoprotein</keyword>
<keyword id="KW-0689">Ribosomal protein</keyword>
<keyword id="KW-0694">RNA-binding</keyword>
<keyword id="KW-0699">rRNA-binding</keyword>
<organism>
    <name type="scientific">Streptococcus pyogenes serotype M3 (strain SSI-1)</name>
    <dbReference type="NCBI Taxonomy" id="193567"/>
    <lineage>
        <taxon>Bacteria</taxon>
        <taxon>Bacillati</taxon>
        <taxon>Bacillota</taxon>
        <taxon>Bacilli</taxon>
        <taxon>Lactobacillales</taxon>
        <taxon>Streptococcaceae</taxon>
        <taxon>Streptococcus</taxon>
    </lineage>
</organism>
<evidence type="ECO:0000255" key="1">
    <source>
        <dbReference type="HAMAP-Rule" id="MF_01310"/>
    </source>
</evidence>
<evidence type="ECO:0000305" key="2"/>
<name>RS11_STRPQ</name>
<proteinExistence type="inferred from homology"/>
<protein>
    <recommendedName>
        <fullName evidence="1">Small ribosomal subunit protein uS11</fullName>
    </recommendedName>
    <alternativeName>
        <fullName evidence="2">30S ribosomal protein S11</fullName>
    </alternativeName>
</protein>
<dbReference type="EMBL" id="BA000034">
    <property type="protein sequence ID" value="BAC63162.1"/>
    <property type="molecule type" value="Genomic_DNA"/>
</dbReference>
<dbReference type="RefSeq" id="WP_001118387.1">
    <property type="nucleotide sequence ID" value="NC_004606.1"/>
</dbReference>
<dbReference type="SMR" id="P0DE65"/>
<dbReference type="GeneID" id="93825319"/>
<dbReference type="KEGG" id="sps:SPs0067"/>
<dbReference type="HOGENOM" id="CLU_072439_5_0_9"/>
<dbReference type="GO" id="GO:1990904">
    <property type="term" value="C:ribonucleoprotein complex"/>
    <property type="evidence" value="ECO:0007669"/>
    <property type="project" value="UniProtKB-KW"/>
</dbReference>
<dbReference type="GO" id="GO:0005840">
    <property type="term" value="C:ribosome"/>
    <property type="evidence" value="ECO:0007669"/>
    <property type="project" value="UniProtKB-KW"/>
</dbReference>
<dbReference type="GO" id="GO:0019843">
    <property type="term" value="F:rRNA binding"/>
    <property type="evidence" value="ECO:0007669"/>
    <property type="project" value="UniProtKB-UniRule"/>
</dbReference>
<dbReference type="GO" id="GO:0003735">
    <property type="term" value="F:structural constituent of ribosome"/>
    <property type="evidence" value="ECO:0007669"/>
    <property type="project" value="InterPro"/>
</dbReference>
<dbReference type="GO" id="GO:0006412">
    <property type="term" value="P:translation"/>
    <property type="evidence" value="ECO:0007669"/>
    <property type="project" value="UniProtKB-UniRule"/>
</dbReference>
<dbReference type="FunFam" id="3.30.420.80:FF:000001">
    <property type="entry name" value="30S ribosomal protein S11"/>
    <property type="match status" value="1"/>
</dbReference>
<dbReference type="Gene3D" id="3.30.420.80">
    <property type="entry name" value="Ribosomal protein S11"/>
    <property type="match status" value="1"/>
</dbReference>
<dbReference type="HAMAP" id="MF_01310">
    <property type="entry name" value="Ribosomal_uS11"/>
    <property type="match status" value="1"/>
</dbReference>
<dbReference type="InterPro" id="IPR001971">
    <property type="entry name" value="Ribosomal_uS11"/>
</dbReference>
<dbReference type="InterPro" id="IPR019981">
    <property type="entry name" value="Ribosomal_uS11_bac-type"/>
</dbReference>
<dbReference type="InterPro" id="IPR018102">
    <property type="entry name" value="Ribosomal_uS11_CS"/>
</dbReference>
<dbReference type="InterPro" id="IPR036967">
    <property type="entry name" value="Ribosomal_uS11_sf"/>
</dbReference>
<dbReference type="NCBIfam" id="NF003698">
    <property type="entry name" value="PRK05309.1"/>
    <property type="match status" value="1"/>
</dbReference>
<dbReference type="NCBIfam" id="TIGR03632">
    <property type="entry name" value="uS11_bact"/>
    <property type="match status" value="1"/>
</dbReference>
<dbReference type="PANTHER" id="PTHR11759">
    <property type="entry name" value="40S RIBOSOMAL PROTEIN S14/30S RIBOSOMAL PROTEIN S11"/>
    <property type="match status" value="1"/>
</dbReference>
<dbReference type="Pfam" id="PF00411">
    <property type="entry name" value="Ribosomal_S11"/>
    <property type="match status" value="1"/>
</dbReference>
<dbReference type="PIRSF" id="PIRSF002131">
    <property type="entry name" value="Ribosomal_S11"/>
    <property type="match status" value="1"/>
</dbReference>
<dbReference type="SUPFAM" id="SSF53137">
    <property type="entry name" value="Translational machinery components"/>
    <property type="match status" value="1"/>
</dbReference>
<dbReference type="PROSITE" id="PS00054">
    <property type="entry name" value="RIBOSOMAL_S11"/>
    <property type="match status" value="1"/>
</dbReference>
<comment type="function">
    <text evidence="1">Located on the platform of the 30S subunit, it bridges several disparate RNA helices of the 16S rRNA. Forms part of the Shine-Dalgarno cleft in the 70S ribosome.</text>
</comment>
<comment type="subunit">
    <text evidence="1">Part of the 30S ribosomal subunit. Interacts with proteins S7 and S18. Binds to IF-3.</text>
</comment>
<comment type="similarity">
    <text evidence="1">Belongs to the universal ribosomal protein uS11 family.</text>
</comment>
<accession>P0DE65</accession>
<accession>P66361</accession>
<accession>Q8K8X0</accession>
<accession>Q8P2Z3</accession>
<feature type="chain" id="PRO_0000411522" description="Small ribosomal subunit protein uS11">
    <location>
        <begin position="1"/>
        <end position="127"/>
    </location>
</feature>
<reference key="1">
    <citation type="journal article" date="2003" name="Genome Res.">
        <title>Genome sequence of an M3 strain of Streptococcus pyogenes reveals a large-scale genomic rearrangement in invasive strains and new insights into phage evolution.</title>
        <authorList>
            <person name="Nakagawa I."/>
            <person name="Kurokawa K."/>
            <person name="Yamashita A."/>
            <person name="Nakata M."/>
            <person name="Tomiyasu Y."/>
            <person name="Okahashi N."/>
            <person name="Kawabata S."/>
            <person name="Yamazaki K."/>
            <person name="Shiba T."/>
            <person name="Yasunaga T."/>
            <person name="Hayashi H."/>
            <person name="Hattori M."/>
            <person name="Hamada S."/>
        </authorList>
    </citation>
    <scope>NUCLEOTIDE SEQUENCE [LARGE SCALE GENOMIC DNA]</scope>
    <source>
        <strain>SSI-1</strain>
    </source>
</reference>
<sequence length="127" mass="13369">MAKPTRKRRVKKNIESGVAHIHATFNNTIVMITDVHGNALAWSSAGALGFKGSRKSTPFAAQMAAEAAAKSAQEHGLKTVEVTVKGPGSGRESAIRALAAAGLEVTAIRDVTPVPHNGARPPKRRRV</sequence>
<gene>
    <name evidence="1" type="primary">rpsK</name>
    <name type="ordered locus">SPs0067</name>
</gene>